<protein>
    <recommendedName>
        <fullName evidence="1">GTPase Era</fullName>
    </recommendedName>
</protein>
<feature type="chain" id="PRO_0000180037" description="GTPase Era">
    <location>
        <begin position="1"/>
        <end position="302"/>
    </location>
</feature>
<feature type="domain" description="Era-type G" evidence="2">
    <location>
        <begin position="10"/>
        <end position="178"/>
    </location>
</feature>
<feature type="domain" description="KH type-2" evidence="1">
    <location>
        <begin position="201"/>
        <end position="285"/>
    </location>
</feature>
<feature type="region of interest" description="G1" evidence="2">
    <location>
        <begin position="18"/>
        <end position="25"/>
    </location>
</feature>
<feature type="region of interest" description="G2" evidence="2">
    <location>
        <begin position="44"/>
        <end position="48"/>
    </location>
</feature>
<feature type="region of interest" description="G3" evidence="2">
    <location>
        <begin position="65"/>
        <end position="68"/>
    </location>
</feature>
<feature type="region of interest" description="G4" evidence="2">
    <location>
        <begin position="127"/>
        <end position="130"/>
    </location>
</feature>
<feature type="region of interest" description="G5" evidence="2">
    <location>
        <begin position="157"/>
        <end position="159"/>
    </location>
</feature>
<feature type="binding site" evidence="1">
    <location>
        <begin position="18"/>
        <end position="25"/>
    </location>
    <ligand>
        <name>GTP</name>
        <dbReference type="ChEBI" id="CHEBI:37565"/>
    </ligand>
</feature>
<feature type="binding site" evidence="1">
    <location>
        <begin position="65"/>
        <end position="69"/>
    </location>
    <ligand>
        <name>GTP</name>
        <dbReference type="ChEBI" id="CHEBI:37565"/>
    </ligand>
</feature>
<feature type="binding site" evidence="1">
    <location>
        <begin position="127"/>
        <end position="130"/>
    </location>
    <ligand>
        <name>GTP</name>
        <dbReference type="ChEBI" id="CHEBI:37565"/>
    </ligand>
</feature>
<proteinExistence type="inferred from homology"/>
<keyword id="KW-0997">Cell inner membrane</keyword>
<keyword id="KW-1003">Cell membrane</keyword>
<keyword id="KW-0963">Cytoplasm</keyword>
<keyword id="KW-0342">GTP-binding</keyword>
<keyword id="KW-0472">Membrane</keyword>
<keyword id="KW-0547">Nucleotide-binding</keyword>
<keyword id="KW-1185">Reference proteome</keyword>
<keyword id="KW-0690">Ribosome biogenesis</keyword>
<keyword id="KW-0694">RNA-binding</keyword>
<keyword id="KW-0699">rRNA-binding</keyword>
<dbReference type="EMBL" id="AE015451">
    <property type="protein sequence ID" value="AAN67056.1"/>
    <property type="molecule type" value="Genomic_DNA"/>
</dbReference>
<dbReference type="RefSeq" id="NP_743592.1">
    <property type="nucleotide sequence ID" value="NC_002947.4"/>
</dbReference>
<dbReference type="SMR" id="Q88MY4"/>
<dbReference type="STRING" id="160488.PP_1434"/>
<dbReference type="PaxDb" id="160488-PP_1434"/>
<dbReference type="KEGG" id="ppu:PP_1434"/>
<dbReference type="PATRIC" id="fig|160488.4.peg.1522"/>
<dbReference type="eggNOG" id="COG1159">
    <property type="taxonomic scope" value="Bacteria"/>
</dbReference>
<dbReference type="HOGENOM" id="CLU_038009_1_2_6"/>
<dbReference type="OrthoDB" id="9805918at2"/>
<dbReference type="PhylomeDB" id="Q88MY4"/>
<dbReference type="BioCyc" id="PPUT160488:G1G01-1526-MONOMER"/>
<dbReference type="Proteomes" id="UP000000556">
    <property type="component" value="Chromosome"/>
</dbReference>
<dbReference type="GO" id="GO:0005829">
    <property type="term" value="C:cytosol"/>
    <property type="evidence" value="ECO:0007669"/>
    <property type="project" value="TreeGrafter"/>
</dbReference>
<dbReference type="GO" id="GO:0005886">
    <property type="term" value="C:plasma membrane"/>
    <property type="evidence" value="ECO:0007669"/>
    <property type="project" value="UniProtKB-SubCell"/>
</dbReference>
<dbReference type="GO" id="GO:0005525">
    <property type="term" value="F:GTP binding"/>
    <property type="evidence" value="ECO:0007669"/>
    <property type="project" value="UniProtKB-UniRule"/>
</dbReference>
<dbReference type="GO" id="GO:0003924">
    <property type="term" value="F:GTPase activity"/>
    <property type="evidence" value="ECO:0007669"/>
    <property type="project" value="UniProtKB-UniRule"/>
</dbReference>
<dbReference type="GO" id="GO:0043024">
    <property type="term" value="F:ribosomal small subunit binding"/>
    <property type="evidence" value="ECO:0007669"/>
    <property type="project" value="TreeGrafter"/>
</dbReference>
<dbReference type="GO" id="GO:0070181">
    <property type="term" value="F:small ribosomal subunit rRNA binding"/>
    <property type="evidence" value="ECO:0007669"/>
    <property type="project" value="UniProtKB-UniRule"/>
</dbReference>
<dbReference type="GO" id="GO:0000028">
    <property type="term" value="P:ribosomal small subunit assembly"/>
    <property type="evidence" value="ECO:0007669"/>
    <property type="project" value="TreeGrafter"/>
</dbReference>
<dbReference type="CDD" id="cd04163">
    <property type="entry name" value="Era"/>
    <property type="match status" value="1"/>
</dbReference>
<dbReference type="CDD" id="cd22534">
    <property type="entry name" value="KH-II_Era"/>
    <property type="match status" value="1"/>
</dbReference>
<dbReference type="FunFam" id="3.30.300.20:FF:000003">
    <property type="entry name" value="GTPase Era"/>
    <property type="match status" value="1"/>
</dbReference>
<dbReference type="FunFam" id="3.40.50.300:FF:000094">
    <property type="entry name" value="GTPase Era"/>
    <property type="match status" value="1"/>
</dbReference>
<dbReference type="Gene3D" id="3.30.300.20">
    <property type="match status" value="1"/>
</dbReference>
<dbReference type="Gene3D" id="3.40.50.300">
    <property type="entry name" value="P-loop containing nucleotide triphosphate hydrolases"/>
    <property type="match status" value="1"/>
</dbReference>
<dbReference type="HAMAP" id="MF_00367">
    <property type="entry name" value="GTPase_Era"/>
    <property type="match status" value="1"/>
</dbReference>
<dbReference type="InterPro" id="IPR030388">
    <property type="entry name" value="G_ERA_dom"/>
</dbReference>
<dbReference type="InterPro" id="IPR006073">
    <property type="entry name" value="GTP-bd"/>
</dbReference>
<dbReference type="InterPro" id="IPR005662">
    <property type="entry name" value="GTPase_Era-like"/>
</dbReference>
<dbReference type="InterPro" id="IPR015946">
    <property type="entry name" value="KH_dom-like_a/b"/>
</dbReference>
<dbReference type="InterPro" id="IPR004044">
    <property type="entry name" value="KH_dom_type_2"/>
</dbReference>
<dbReference type="InterPro" id="IPR009019">
    <property type="entry name" value="KH_sf_prok-type"/>
</dbReference>
<dbReference type="InterPro" id="IPR027417">
    <property type="entry name" value="P-loop_NTPase"/>
</dbReference>
<dbReference type="InterPro" id="IPR005225">
    <property type="entry name" value="Small_GTP-bd"/>
</dbReference>
<dbReference type="NCBIfam" id="TIGR00436">
    <property type="entry name" value="era"/>
    <property type="match status" value="1"/>
</dbReference>
<dbReference type="NCBIfam" id="NF000908">
    <property type="entry name" value="PRK00089.1"/>
    <property type="match status" value="1"/>
</dbReference>
<dbReference type="NCBIfam" id="TIGR00231">
    <property type="entry name" value="small_GTP"/>
    <property type="match status" value="1"/>
</dbReference>
<dbReference type="PANTHER" id="PTHR42698">
    <property type="entry name" value="GTPASE ERA"/>
    <property type="match status" value="1"/>
</dbReference>
<dbReference type="PANTHER" id="PTHR42698:SF1">
    <property type="entry name" value="GTPASE ERA, MITOCHONDRIAL"/>
    <property type="match status" value="1"/>
</dbReference>
<dbReference type="Pfam" id="PF07650">
    <property type="entry name" value="KH_2"/>
    <property type="match status" value="1"/>
</dbReference>
<dbReference type="Pfam" id="PF01926">
    <property type="entry name" value="MMR_HSR1"/>
    <property type="match status" value="1"/>
</dbReference>
<dbReference type="PRINTS" id="PR00326">
    <property type="entry name" value="GTP1OBG"/>
</dbReference>
<dbReference type="SUPFAM" id="SSF52540">
    <property type="entry name" value="P-loop containing nucleoside triphosphate hydrolases"/>
    <property type="match status" value="1"/>
</dbReference>
<dbReference type="SUPFAM" id="SSF54814">
    <property type="entry name" value="Prokaryotic type KH domain (KH-domain type II)"/>
    <property type="match status" value="1"/>
</dbReference>
<dbReference type="PROSITE" id="PS51713">
    <property type="entry name" value="G_ERA"/>
    <property type="match status" value="1"/>
</dbReference>
<dbReference type="PROSITE" id="PS50823">
    <property type="entry name" value="KH_TYPE_2"/>
    <property type="match status" value="1"/>
</dbReference>
<name>ERA_PSEPK</name>
<sequence>MAMTDSNPTRCGYVAIVGRPNVGKSTLLNHILGQKLAITSRKPQTTRHNMLGIKTEGDVQAIYVDTPGMHKANDKALNRYMNRNASAALKDVDVVIFVVDRTKWTDEDQLVLERVQYVTGPLIIAVNKTDRMEEKAELIPHLQWLQEQLPNAEVMPISAQQGHNLDALEAQIAKHLPENDHFFPEDQITDRSSRFLAAELVREKIMRQLGAELPYQITVEIEEFKQQGHVLHIHALILVERDGQKKIIIGDKGERIKRIGSEARKDMEVLFDSKVMLNLWVKVKGGWSDDERALRSLGYGDL</sequence>
<accession>Q88MY4</accession>
<reference key="1">
    <citation type="journal article" date="2002" name="Environ. Microbiol.">
        <title>Complete genome sequence and comparative analysis of the metabolically versatile Pseudomonas putida KT2440.</title>
        <authorList>
            <person name="Nelson K.E."/>
            <person name="Weinel C."/>
            <person name="Paulsen I.T."/>
            <person name="Dodson R.J."/>
            <person name="Hilbert H."/>
            <person name="Martins dos Santos V.A.P."/>
            <person name="Fouts D.E."/>
            <person name="Gill S.R."/>
            <person name="Pop M."/>
            <person name="Holmes M."/>
            <person name="Brinkac L.M."/>
            <person name="Beanan M.J."/>
            <person name="DeBoy R.T."/>
            <person name="Daugherty S.C."/>
            <person name="Kolonay J.F."/>
            <person name="Madupu R."/>
            <person name="Nelson W.C."/>
            <person name="White O."/>
            <person name="Peterson J.D."/>
            <person name="Khouri H.M."/>
            <person name="Hance I."/>
            <person name="Chris Lee P."/>
            <person name="Holtzapple E.K."/>
            <person name="Scanlan D."/>
            <person name="Tran K."/>
            <person name="Moazzez A."/>
            <person name="Utterback T.R."/>
            <person name="Rizzo M."/>
            <person name="Lee K."/>
            <person name="Kosack D."/>
            <person name="Moestl D."/>
            <person name="Wedler H."/>
            <person name="Lauber J."/>
            <person name="Stjepandic D."/>
            <person name="Hoheisel J."/>
            <person name="Straetz M."/>
            <person name="Heim S."/>
            <person name="Kiewitz C."/>
            <person name="Eisen J.A."/>
            <person name="Timmis K.N."/>
            <person name="Duesterhoeft A."/>
            <person name="Tuemmler B."/>
            <person name="Fraser C.M."/>
        </authorList>
    </citation>
    <scope>NUCLEOTIDE SEQUENCE [LARGE SCALE GENOMIC DNA]</scope>
    <source>
        <strain>ATCC 47054 / DSM 6125 / CFBP 8728 / NCIMB 11950 / KT2440</strain>
    </source>
</reference>
<gene>
    <name evidence="1" type="primary">era</name>
    <name type="ordered locus">PP_1434</name>
</gene>
<evidence type="ECO:0000255" key="1">
    <source>
        <dbReference type="HAMAP-Rule" id="MF_00367"/>
    </source>
</evidence>
<evidence type="ECO:0000255" key="2">
    <source>
        <dbReference type="PROSITE-ProRule" id="PRU01050"/>
    </source>
</evidence>
<organism>
    <name type="scientific">Pseudomonas putida (strain ATCC 47054 / DSM 6125 / CFBP 8728 / NCIMB 11950 / KT2440)</name>
    <dbReference type="NCBI Taxonomy" id="160488"/>
    <lineage>
        <taxon>Bacteria</taxon>
        <taxon>Pseudomonadati</taxon>
        <taxon>Pseudomonadota</taxon>
        <taxon>Gammaproteobacteria</taxon>
        <taxon>Pseudomonadales</taxon>
        <taxon>Pseudomonadaceae</taxon>
        <taxon>Pseudomonas</taxon>
    </lineage>
</organism>
<comment type="function">
    <text evidence="1">An essential GTPase that binds both GDP and GTP, with rapid nucleotide exchange. Plays a role in 16S rRNA processing and 30S ribosomal subunit biogenesis and possibly also in cell cycle regulation and energy metabolism.</text>
</comment>
<comment type="subunit">
    <text evidence="1">Monomer.</text>
</comment>
<comment type="subcellular location">
    <subcellularLocation>
        <location>Cytoplasm</location>
    </subcellularLocation>
    <subcellularLocation>
        <location evidence="1">Cell inner membrane</location>
        <topology evidence="1">Peripheral membrane protein</topology>
    </subcellularLocation>
</comment>
<comment type="similarity">
    <text evidence="1 2">Belongs to the TRAFAC class TrmE-Era-EngA-EngB-Septin-like GTPase superfamily. Era GTPase family.</text>
</comment>